<name>FADB_ESCF3</name>
<gene>
    <name evidence="1" type="primary">fadB</name>
    <name type="ordered locus">EFER_3635</name>
</gene>
<protein>
    <recommendedName>
        <fullName evidence="1">Fatty acid oxidation complex subunit alpha</fullName>
    </recommendedName>
    <domain>
        <recommendedName>
            <fullName evidence="1">Enoyl-CoA hydratase/Delta(3)-cis-Delta(2)-trans-enoyl-CoA isomerase/3-hydroxybutyryl-CoA epimerase</fullName>
            <ecNumber evidence="1">4.2.1.17</ecNumber>
            <ecNumber evidence="1">5.1.2.3</ecNumber>
            <ecNumber evidence="1">5.3.3.8</ecNumber>
        </recommendedName>
    </domain>
    <domain>
        <recommendedName>
            <fullName evidence="1">3-hydroxyacyl-CoA dehydrogenase</fullName>
            <ecNumber evidence="1">1.1.1.35</ecNumber>
        </recommendedName>
    </domain>
</protein>
<organism>
    <name type="scientific">Escherichia fergusonii (strain ATCC 35469 / DSM 13698 / CCUG 18766 / IAM 14443 / JCM 21226 / LMG 7866 / NBRC 102419 / NCTC 12128 / CDC 0568-73)</name>
    <dbReference type="NCBI Taxonomy" id="585054"/>
    <lineage>
        <taxon>Bacteria</taxon>
        <taxon>Pseudomonadati</taxon>
        <taxon>Pseudomonadota</taxon>
        <taxon>Gammaproteobacteria</taxon>
        <taxon>Enterobacterales</taxon>
        <taxon>Enterobacteriaceae</taxon>
        <taxon>Escherichia</taxon>
    </lineage>
</organism>
<accession>B7LTY9</accession>
<reference key="1">
    <citation type="journal article" date="2009" name="PLoS Genet.">
        <title>Organised genome dynamics in the Escherichia coli species results in highly diverse adaptive paths.</title>
        <authorList>
            <person name="Touchon M."/>
            <person name="Hoede C."/>
            <person name="Tenaillon O."/>
            <person name="Barbe V."/>
            <person name="Baeriswyl S."/>
            <person name="Bidet P."/>
            <person name="Bingen E."/>
            <person name="Bonacorsi S."/>
            <person name="Bouchier C."/>
            <person name="Bouvet O."/>
            <person name="Calteau A."/>
            <person name="Chiapello H."/>
            <person name="Clermont O."/>
            <person name="Cruveiller S."/>
            <person name="Danchin A."/>
            <person name="Diard M."/>
            <person name="Dossat C."/>
            <person name="Karoui M.E."/>
            <person name="Frapy E."/>
            <person name="Garry L."/>
            <person name="Ghigo J.M."/>
            <person name="Gilles A.M."/>
            <person name="Johnson J."/>
            <person name="Le Bouguenec C."/>
            <person name="Lescat M."/>
            <person name="Mangenot S."/>
            <person name="Martinez-Jehanne V."/>
            <person name="Matic I."/>
            <person name="Nassif X."/>
            <person name="Oztas S."/>
            <person name="Petit M.A."/>
            <person name="Pichon C."/>
            <person name="Rouy Z."/>
            <person name="Ruf C.S."/>
            <person name="Schneider D."/>
            <person name="Tourret J."/>
            <person name="Vacherie B."/>
            <person name="Vallenet D."/>
            <person name="Medigue C."/>
            <person name="Rocha E.P.C."/>
            <person name="Denamur E."/>
        </authorList>
    </citation>
    <scope>NUCLEOTIDE SEQUENCE [LARGE SCALE GENOMIC DNA]</scope>
    <source>
        <strain>ATCC 35469 / DSM 13698 / BCRC 15582 / CCUG 18766 / IAM 14443 / JCM 21226 / LMG 7866 / NBRC 102419 / NCTC 12128 / CDC 0568-73</strain>
    </source>
</reference>
<sequence>MLYKGDTLYLDWLEDGIAELVFDAPGSVNKLDTATVASLGEAIGVLEQQSDLKGLLLRSNKAAFIVGADITEFLSLFLVPEEQLSQWLHFANSVFNRLEDLPVPTIAAVNGYALGGGCECVLATDYRLATPDLRIGLPETKLGIMPGFGGSVRMPRMLGADSALEIIAAGKDVGADQALKIGLVDGVVKAEKLVEGAKAILRQAINGDLDWKAKRQPKLEPLKLSKIEATMSFTIAKGMVAQTAGKHYPAPITAVKTIEAAARFGREEALNLENKSFVPLAHTNEARALVGIFLNDQYVKGKAKKLTKDVETPKQAAVLGAGIMGGGIAYQSAWKGVPVVMKDINDKSLTLGMTEAAKLLNKQLERGKIDGLKLAGVISTIHPTLDYAGFDRVDVVVEAVVENPKVKKAVLAETEQKVRPDTVLASNTSTIPISELANALERPENFCGMHFFNPVHRMPLVEIIRGEKSSDETIAKVVAWASKMGKTPIVVNDCPGFFVNRVLFPYFAGFSQLLRDGADFRKIDKVMEKQFGWPMGPAYLLDVVGIDTAHHAQAVMAAGFPQRMQKDYRDAIDALFDANRFGQKNGLGFWRYKEDSKGKPKKEEDAAVDDLLAEVSQPKRDFSEEEIIARMMIPMVNEVVRCLEEGIIATPAEADMALVYGLGFPPFHGGAFRWLDTLGSAKYLDMAQQYQHLGPLYEVPEGLRNKARHNEPYYPQVEPARAVGDLKTA</sequence>
<proteinExistence type="inferred from homology"/>
<keyword id="KW-0276">Fatty acid metabolism</keyword>
<keyword id="KW-0413">Isomerase</keyword>
<keyword id="KW-0442">Lipid degradation</keyword>
<keyword id="KW-0443">Lipid metabolism</keyword>
<keyword id="KW-0456">Lyase</keyword>
<keyword id="KW-0511">Multifunctional enzyme</keyword>
<keyword id="KW-0520">NAD</keyword>
<keyword id="KW-0560">Oxidoreductase</keyword>
<feature type="chain" id="PRO_1000186043" description="Fatty acid oxidation complex subunit alpha">
    <location>
        <begin position="1"/>
        <end position="729"/>
    </location>
</feature>
<feature type="region of interest" description="Enoyl-CoA hydratase/isomerase" evidence="1">
    <location>
        <begin position="1"/>
        <end position="189"/>
    </location>
</feature>
<feature type="region of interest" description="3-hydroxyacyl-CoA dehydrogenase" evidence="1">
    <location>
        <begin position="311"/>
        <end position="729"/>
    </location>
</feature>
<feature type="active site" description="For 3-hydroxyacyl-CoA dehydrogenase activity" evidence="1">
    <location>
        <position position="450"/>
    </location>
</feature>
<feature type="binding site" evidence="1">
    <location>
        <position position="296"/>
    </location>
    <ligand>
        <name>substrate</name>
    </ligand>
</feature>
<feature type="binding site" evidence="1">
    <location>
        <position position="324"/>
    </location>
    <ligand>
        <name>NAD(+)</name>
        <dbReference type="ChEBI" id="CHEBI:57540"/>
    </ligand>
</feature>
<feature type="binding site" evidence="1">
    <location>
        <position position="343"/>
    </location>
    <ligand>
        <name>NAD(+)</name>
        <dbReference type="ChEBI" id="CHEBI:57540"/>
    </ligand>
</feature>
<feature type="binding site" evidence="1">
    <location>
        <begin position="400"/>
        <end position="402"/>
    </location>
    <ligand>
        <name>NAD(+)</name>
        <dbReference type="ChEBI" id="CHEBI:57540"/>
    </ligand>
</feature>
<feature type="binding site" evidence="1">
    <location>
        <position position="407"/>
    </location>
    <ligand>
        <name>NAD(+)</name>
        <dbReference type="ChEBI" id="CHEBI:57540"/>
    </ligand>
</feature>
<feature type="binding site" evidence="1">
    <location>
        <position position="429"/>
    </location>
    <ligand>
        <name>NAD(+)</name>
        <dbReference type="ChEBI" id="CHEBI:57540"/>
    </ligand>
</feature>
<feature type="binding site" evidence="1">
    <location>
        <position position="453"/>
    </location>
    <ligand>
        <name>NAD(+)</name>
        <dbReference type="ChEBI" id="CHEBI:57540"/>
    </ligand>
</feature>
<feature type="binding site" evidence="1">
    <location>
        <position position="500"/>
    </location>
    <ligand>
        <name>substrate</name>
    </ligand>
</feature>
<feature type="binding site" evidence="1">
    <location>
        <position position="660"/>
    </location>
    <ligand>
        <name>substrate</name>
    </ligand>
</feature>
<feature type="site" description="Important for catalytic activity" evidence="1">
    <location>
        <position position="119"/>
    </location>
</feature>
<feature type="site" description="Important for catalytic activity" evidence="1">
    <location>
        <position position="139"/>
    </location>
</feature>
<comment type="function">
    <text evidence="1">Involved in the aerobic and anaerobic degradation of long-chain fatty acids via beta-oxidation cycle. Catalyzes the formation of 3-oxoacyl-CoA from enoyl-CoA via L-3-hydroxyacyl-CoA. It can also use D-3-hydroxyacyl-CoA and cis-3-enoyl-CoA as substrate.</text>
</comment>
<comment type="catalytic activity">
    <reaction evidence="1">
        <text>a (3S)-3-hydroxyacyl-CoA + NAD(+) = a 3-oxoacyl-CoA + NADH + H(+)</text>
        <dbReference type="Rhea" id="RHEA:22432"/>
        <dbReference type="ChEBI" id="CHEBI:15378"/>
        <dbReference type="ChEBI" id="CHEBI:57318"/>
        <dbReference type="ChEBI" id="CHEBI:57540"/>
        <dbReference type="ChEBI" id="CHEBI:57945"/>
        <dbReference type="ChEBI" id="CHEBI:90726"/>
        <dbReference type="EC" id="1.1.1.35"/>
    </reaction>
</comment>
<comment type="catalytic activity">
    <reaction evidence="1">
        <text>a (3S)-3-hydroxyacyl-CoA = a (2E)-enoyl-CoA + H2O</text>
        <dbReference type="Rhea" id="RHEA:16105"/>
        <dbReference type="ChEBI" id="CHEBI:15377"/>
        <dbReference type="ChEBI" id="CHEBI:57318"/>
        <dbReference type="ChEBI" id="CHEBI:58856"/>
        <dbReference type="EC" id="4.2.1.17"/>
    </reaction>
</comment>
<comment type="catalytic activity">
    <reaction evidence="1">
        <text>a 4-saturated-(3S)-3-hydroxyacyl-CoA = a (3E)-enoyl-CoA + H2O</text>
        <dbReference type="Rhea" id="RHEA:20724"/>
        <dbReference type="ChEBI" id="CHEBI:15377"/>
        <dbReference type="ChEBI" id="CHEBI:58521"/>
        <dbReference type="ChEBI" id="CHEBI:137480"/>
        <dbReference type="EC" id="4.2.1.17"/>
    </reaction>
</comment>
<comment type="catalytic activity">
    <reaction evidence="1">
        <text>(3S)-3-hydroxybutanoyl-CoA = (3R)-3-hydroxybutanoyl-CoA</text>
        <dbReference type="Rhea" id="RHEA:21760"/>
        <dbReference type="ChEBI" id="CHEBI:57315"/>
        <dbReference type="ChEBI" id="CHEBI:57316"/>
        <dbReference type="EC" id="5.1.2.3"/>
    </reaction>
</comment>
<comment type="catalytic activity">
    <reaction evidence="1">
        <text>a (3Z)-enoyl-CoA = a 4-saturated (2E)-enoyl-CoA</text>
        <dbReference type="Rhea" id="RHEA:45900"/>
        <dbReference type="ChEBI" id="CHEBI:85097"/>
        <dbReference type="ChEBI" id="CHEBI:85489"/>
        <dbReference type="EC" id="5.3.3.8"/>
    </reaction>
</comment>
<comment type="catalytic activity">
    <reaction evidence="1">
        <text>a (3E)-enoyl-CoA = a 4-saturated (2E)-enoyl-CoA</text>
        <dbReference type="Rhea" id="RHEA:45228"/>
        <dbReference type="ChEBI" id="CHEBI:58521"/>
        <dbReference type="ChEBI" id="CHEBI:85097"/>
        <dbReference type="EC" id="5.3.3.8"/>
    </reaction>
</comment>
<comment type="pathway">
    <text evidence="1">Lipid metabolism; fatty acid beta-oxidation.</text>
</comment>
<comment type="subunit">
    <text evidence="1">Heterotetramer of two alpha chains (FadB) and two beta chains (FadA).</text>
</comment>
<comment type="similarity">
    <text evidence="1">In the N-terminal section; belongs to the enoyl-CoA hydratase/isomerase family.</text>
</comment>
<comment type="similarity">
    <text evidence="1">In the C-terminal section; belongs to the 3-hydroxyacyl-CoA dehydrogenase family.</text>
</comment>
<dbReference type="EC" id="4.2.1.17" evidence="1"/>
<dbReference type="EC" id="5.1.2.3" evidence="1"/>
<dbReference type="EC" id="5.3.3.8" evidence="1"/>
<dbReference type="EC" id="1.1.1.35" evidence="1"/>
<dbReference type="EMBL" id="CU928158">
    <property type="protein sequence ID" value="CAQ91097.1"/>
    <property type="molecule type" value="Genomic_DNA"/>
</dbReference>
<dbReference type="RefSeq" id="WP_000965931.1">
    <property type="nucleotide sequence ID" value="NC_011740.1"/>
</dbReference>
<dbReference type="SMR" id="B7LTY9"/>
<dbReference type="GeneID" id="75059764"/>
<dbReference type="KEGG" id="efe:EFER_3635"/>
<dbReference type="HOGENOM" id="CLU_009834_16_3_6"/>
<dbReference type="OrthoDB" id="5389341at2"/>
<dbReference type="UniPathway" id="UPA00659"/>
<dbReference type="Proteomes" id="UP000000745">
    <property type="component" value="Chromosome"/>
</dbReference>
<dbReference type="GO" id="GO:0036125">
    <property type="term" value="C:fatty acid beta-oxidation multienzyme complex"/>
    <property type="evidence" value="ECO:0007669"/>
    <property type="project" value="InterPro"/>
</dbReference>
<dbReference type="GO" id="GO:0008692">
    <property type="term" value="F:3-hydroxybutyryl-CoA epimerase activity"/>
    <property type="evidence" value="ECO:0007669"/>
    <property type="project" value="UniProtKB-UniRule"/>
</dbReference>
<dbReference type="GO" id="GO:0004165">
    <property type="term" value="F:delta(3)-delta(2)-enoyl-CoA isomerase activity"/>
    <property type="evidence" value="ECO:0007669"/>
    <property type="project" value="UniProtKB-UniRule"/>
</dbReference>
<dbReference type="GO" id="GO:0004300">
    <property type="term" value="F:enoyl-CoA hydratase activity"/>
    <property type="evidence" value="ECO:0007669"/>
    <property type="project" value="UniProtKB-UniRule"/>
</dbReference>
<dbReference type="GO" id="GO:0016509">
    <property type="term" value="F:long-chain-3-hydroxyacyl-CoA dehydrogenase activity"/>
    <property type="evidence" value="ECO:0007669"/>
    <property type="project" value="TreeGrafter"/>
</dbReference>
<dbReference type="GO" id="GO:0070403">
    <property type="term" value="F:NAD+ binding"/>
    <property type="evidence" value="ECO:0007669"/>
    <property type="project" value="InterPro"/>
</dbReference>
<dbReference type="GO" id="GO:0006635">
    <property type="term" value="P:fatty acid beta-oxidation"/>
    <property type="evidence" value="ECO:0007669"/>
    <property type="project" value="UniProtKB-UniRule"/>
</dbReference>
<dbReference type="CDD" id="cd06558">
    <property type="entry name" value="crotonase-like"/>
    <property type="match status" value="1"/>
</dbReference>
<dbReference type="FunFam" id="1.10.1040.50:FF:000001">
    <property type="entry name" value="Fatty acid oxidation complex subunit alpha"/>
    <property type="match status" value="1"/>
</dbReference>
<dbReference type="FunFam" id="3.90.226.10:FF:000018">
    <property type="entry name" value="Fatty acid oxidation complex subunit alpha"/>
    <property type="match status" value="1"/>
</dbReference>
<dbReference type="FunFam" id="3.40.50.720:FF:000009">
    <property type="entry name" value="Fatty oxidation complex, alpha subunit"/>
    <property type="match status" value="1"/>
</dbReference>
<dbReference type="Gene3D" id="1.10.1040.50">
    <property type="match status" value="1"/>
</dbReference>
<dbReference type="Gene3D" id="3.90.226.10">
    <property type="entry name" value="2-enoyl-CoA Hydratase, Chain A, domain 1"/>
    <property type="match status" value="1"/>
</dbReference>
<dbReference type="Gene3D" id="3.40.50.720">
    <property type="entry name" value="NAD(P)-binding Rossmann-like Domain"/>
    <property type="match status" value="1"/>
</dbReference>
<dbReference type="HAMAP" id="MF_01621">
    <property type="entry name" value="FadB"/>
    <property type="match status" value="1"/>
</dbReference>
<dbReference type="InterPro" id="IPR006180">
    <property type="entry name" value="3-OHacyl-CoA_DH_CS"/>
</dbReference>
<dbReference type="InterPro" id="IPR006176">
    <property type="entry name" value="3-OHacyl-CoA_DH_NAD-bd"/>
</dbReference>
<dbReference type="InterPro" id="IPR006108">
    <property type="entry name" value="3HC_DH_C"/>
</dbReference>
<dbReference type="InterPro" id="IPR008927">
    <property type="entry name" value="6-PGluconate_DH-like_C_sf"/>
</dbReference>
<dbReference type="InterPro" id="IPR029045">
    <property type="entry name" value="ClpP/crotonase-like_dom_sf"/>
</dbReference>
<dbReference type="InterPro" id="IPR018376">
    <property type="entry name" value="Enoyl-CoA_hyd/isom_CS"/>
</dbReference>
<dbReference type="InterPro" id="IPR001753">
    <property type="entry name" value="Enoyl-CoA_hydra/iso"/>
</dbReference>
<dbReference type="InterPro" id="IPR050136">
    <property type="entry name" value="FA_oxidation_alpha_subunit"/>
</dbReference>
<dbReference type="InterPro" id="IPR012799">
    <property type="entry name" value="FadB"/>
</dbReference>
<dbReference type="InterPro" id="IPR036291">
    <property type="entry name" value="NAD(P)-bd_dom_sf"/>
</dbReference>
<dbReference type="NCBIfam" id="TIGR02437">
    <property type="entry name" value="FadB"/>
    <property type="match status" value="1"/>
</dbReference>
<dbReference type="NCBIfam" id="NF008727">
    <property type="entry name" value="PRK11730.1"/>
    <property type="match status" value="1"/>
</dbReference>
<dbReference type="PANTHER" id="PTHR43612">
    <property type="entry name" value="TRIFUNCTIONAL ENZYME SUBUNIT ALPHA"/>
    <property type="match status" value="1"/>
</dbReference>
<dbReference type="PANTHER" id="PTHR43612:SF3">
    <property type="entry name" value="TRIFUNCTIONAL ENZYME SUBUNIT ALPHA, MITOCHONDRIAL"/>
    <property type="match status" value="1"/>
</dbReference>
<dbReference type="Pfam" id="PF00725">
    <property type="entry name" value="3HCDH"/>
    <property type="match status" value="2"/>
</dbReference>
<dbReference type="Pfam" id="PF02737">
    <property type="entry name" value="3HCDH_N"/>
    <property type="match status" value="1"/>
</dbReference>
<dbReference type="Pfam" id="PF00378">
    <property type="entry name" value="ECH_1"/>
    <property type="match status" value="1"/>
</dbReference>
<dbReference type="SUPFAM" id="SSF48179">
    <property type="entry name" value="6-phosphogluconate dehydrogenase C-terminal domain-like"/>
    <property type="match status" value="2"/>
</dbReference>
<dbReference type="SUPFAM" id="SSF52096">
    <property type="entry name" value="ClpP/crotonase"/>
    <property type="match status" value="1"/>
</dbReference>
<dbReference type="SUPFAM" id="SSF51735">
    <property type="entry name" value="NAD(P)-binding Rossmann-fold domains"/>
    <property type="match status" value="1"/>
</dbReference>
<dbReference type="PROSITE" id="PS00067">
    <property type="entry name" value="3HCDH"/>
    <property type="match status" value="1"/>
</dbReference>
<dbReference type="PROSITE" id="PS00166">
    <property type="entry name" value="ENOYL_COA_HYDRATASE"/>
    <property type="match status" value="1"/>
</dbReference>
<evidence type="ECO:0000255" key="1">
    <source>
        <dbReference type="HAMAP-Rule" id="MF_01621"/>
    </source>
</evidence>